<keyword id="KW-0004">4Fe-4S</keyword>
<keyword id="KW-0963">Cytoplasm</keyword>
<keyword id="KW-1015">Disulfide bond</keyword>
<keyword id="KW-0408">Iron</keyword>
<keyword id="KW-0411">Iron-sulfur</keyword>
<keyword id="KW-0479">Metal-binding</keyword>
<keyword id="KW-0489">Methyltransferase</keyword>
<keyword id="KW-0698">rRNA processing</keyword>
<keyword id="KW-0949">S-adenosyl-L-methionine</keyword>
<keyword id="KW-0808">Transferase</keyword>
<keyword id="KW-0819">tRNA processing</keyword>
<gene>
    <name evidence="1" type="primary">rlmN</name>
    <name type="ordered locus">LMHCC_2160</name>
</gene>
<feature type="chain" id="PRO_1000188583" description="Probable dual-specificity RNA methyltransferase RlmN">
    <location>
        <begin position="1"/>
        <end position="367"/>
    </location>
</feature>
<feature type="domain" description="Radical SAM core" evidence="2">
    <location>
        <begin position="98"/>
        <end position="326"/>
    </location>
</feature>
<feature type="active site" description="Proton acceptor" evidence="1">
    <location>
        <position position="92"/>
    </location>
</feature>
<feature type="active site" description="S-methylcysteine intermediate" evidence="1">
    <location>
        <position position="341"/>
    </location>
</feature>
<feature type="binding site" evidence="1">
    <location>
        <position position="112"/>
    </location>
    <ligand>
        <name>[4Fe-4S] cluster</name>
        <dbReference type="ChEBI" id="CHEBI:49883"/>
        <note>4Fe-4S-S-AdoMet</note>
    </ligand>
</feature>
<feature type="binding site" evidence="1">
    <location>
        <position position="116"/>
    </location>
    <ligand>
        <name>[4Fe-4S] cluster</name>
        <dbReference type="ChEBI" id="CHEBI:49883"/>
        <note>4Fe-4S-S-AdoMet</note>
    </ligand>
</feature>
<feature type="binding site" evidence="1">
    <location>
        <position position="119"/>
    </location>
    <ligand>
        <name>[4Fe-4S] cluster</name>
        <dbReference type="ChEBI" id="CHEBI:49883"/>
        <note>4Fe-4S-S-AdoMet</note>
    </ligand>
</feature>
<feature type="binding site" evidence="1">
    <location>
        <begin position="164"/>
        <end position="165"/>
    </location>
    <ligand>
        <name>S-adenosyl-L-methionine</name>
        <dbReference type="ChEBI" id="CHEBI:59789"/>
    </ligand>
</feature>
<feature type="binding site" evidence="1">
    <location>
        <position position="196"/>
    </location>
    <ligand>
        <name>S-adenosyl-L-methionine</name>
        <dbReference type="ChEBI" id="CHEBI:59789"/>
    </ligand>
</feature>
<feature type="binding site" evidence="1">
    <location>
        <begin position="219"/>
        <end position="221"/>
    </location>
    <ligand>
        <name>S-adenosyl-L-methionine</name>
        <dbReference type="ChEBI" id="CHEBI:59789"/>
    </ligand>
</feature>
<feature type="binding site" evidence="1">
    <location>
        <position position="297"/>
    </location>
    <ligand>
        <name>S-adenosyl-L-methionine</name>
        <dbReference type="ChEBI" id="CHEBI:59789"/>
    </ligand>
</feature>
<feature type="disulfide bond" description="(transient)" evidence="1">
    <location>
        <begin position="105"/>
        <end position="341"/>
    </location>
</feature>
<name>RLMN_LISMH</name>
<reference key="1">
    <citation type="journal article" date="2011" name="J. Bacteriol.">
        <title>Genome sequence of lineage III Listeria monocytogenes strain HCC23.</title>
        <authorList>
            <person name="Steele C.L."/>
            <person name="Donaldson J.R."/>
            <person name="Paul D."/>
            <person name="Banes M.M."/>
            <person name="Arick T."/>
            <person name="Bridges S.M."/>
            <person name="Lawrence M.L."/>
        </authorList>
    </citation>
    <scope>NUCLEOTIDE SEQUENCE [LARGE SCALE GENOMIC DNA]</scope>
    <source>
        <strain>HCC23</strain>
    </source>
</reference>
<organism>
    <name type="scientific">Listeria monocytogenes serotype 4a (strain HCC23)</name>
    <dbReference type="NCBI Taxonomy" id="552536"/>
    <lineage>
        <taxon>Bacteria</taxon>
        <taxon>Bacillati</taxon>
        <taxon>Bacillota</taxon>
        <taxon>Bacilli</taxon>
        <taxon>Bacillales</taxon>
        <taxon>Listeriaceae</taxon>
        <taxon>Listeria</taxon>
    </lineage>
</organism>
<sequence length="367" mass="42101">MEKSSIYGLTWTKLTEWLEAHGQKKFRATQVWDWLYRKRVKTFEEMSNVPKETIELLTANFVMNTLEEQVVQESTDGTTKYLFKLSDGNLIETVMMKQEYGLSVCVTTQVGCNIGCTFCASGLLKKSRDLTAGEIVEQIMNVQHYLDGRNLEERVSHVVVMGIGEPFDNYDNVMDFLRVINHDKGLAIGARHITVSTSGLAPRIIDFANEDFQVNLAISLHAPNNELRTSIMRINKTYSIEKLMEAIHYYVNKTNRRITFEYIMLKGVNDHKKEALELAALLGEHRHLAYVNLIPYNPVDEHIDYERSTKEDVLAFYDTLKKNGINCVIRREHGTDIDAACGQLRSKQIKRVGVRERMKQKQAAAEE</sequence>
<proteinExistence type="inferred from homology"/>
<evidence type="ECO:0000255" key="1">
    <source>
        <dbReference type="HAMAP-Rule" id="MF_01849"/>
    </source>
</evidence>
<evidence type="ECO:0000255" key="2">
    <source>
        <dbReference type="PROSITE-ProRule" id="PRU01266"/>
    </source>
</evidence>
<accession>B8DCJ5</accession>
<dbReference type="EC" id="2.1.1.192" evidence="1"/>
<dbReference type="EMBL" id="CP001175">
    <property type="protein sequence ID" value="ACK40498.1"/>
    <property type="molecule type" value="Genomic_DNA"/>
</dbReference>
<dbReference type="RefSeq" id="WP_003725208.1">
    <property type="nucleotide sequence ID" value="NC_011660.1"/>
</dbReference>
<dbReference type="SMR" id="B8DCJ5"/>
<dbReference type="GeneID" id="93233932"/>
<dbReference type="KEGG" id="lmh:LMHCC_2160"/>
<dbReference type="HOGENOM" id="CLU_029101_0_1_9"/>
<dbReference type="GO" id="GO:0005737">
    <property type="term" value="C:cytoplasm"/>
    <property type="evidence" value="ECO:0007669"/>
    <property type="project" value="UniProtKB-SubCell"/>
</dbReference>
<dbReference type="GO" id="GO:0051539">
    <property type="term" value="F:4 iron, 4 sulfur cluster binding"/>
    <property type="evidence" value="ECO:0007669"/>
    <property type="project" value="UniProtKB-UniRule"/>
</dbReference>
<dbReference type="GO" id="GO:0046872">
    <property type="term" value="F:metal ion binding"/>
    <property type="evidence" value="ECO:0007669"/>
    <property type="project" value="UniProtKB-KW"/>
</dbReference>
<dbReference type="GO" id="GO:0070040">
    <property type="term" value="F:rRNA (adenine(2503)-C2-)-methyltransferase activity"/>
    <property type="evidence" value="ECO:0007669"/>
    <property type="project" value="UniProtKB-UniRule"/>
</dbReference>
<dbReference type="GO" id="GO:0019843">
    <property type="term" value="F:rRNA binding"/>
    <property type="evidence" value="ECO:0007669"/>
    <property type="project" value="UniProtKB-UniRule"/>
</dbReference>
<dbReference type="GO" id="GO:0002935">
    <property type="term" value="F:tRNA (adenine(37)-C2)-methyltransferase activity"/>
    <property type="evidence" value="ECO:0007669"/>
    <property type="project" value="UniProtKB-UniRule"/>
</dbReference>
<dbReference type="GO" id="GO:0000049">
    <property type="term" value="F:tRNA binding"/>
    <property type="evidence" value="ECO:0007669"/>
    <property type="project" value="UniProtKB-UniRule"/>
</dbReference>
<dbReference type="GO" id="GO:0070475">
    <property type="term" value="P:rRNA base methylation"/>
    <property type="evidence" value="ECO:0007669"/>
    <property type="project" value="UniProtKB-UniRule"/>
</dbReference>
<dbReference type="GO" id="GO:0030488">
    <property type="term" value="P:tRNA methylation"/>
    <property type="evidence" value="ECO:0007669"/>
    <property type="project" value="UniProtKB-UniRule"/>
</dbReference>
<dbReference type="CDD" id="cd01335">
    <property type="entry name" value="Radical_SAM"/>
    <property type="match status" value="1"/>
</dbReference>
<dbReference type="FunFam" id="3.20.20.70:FF:000014">
    <property type="entry name" value="Probable dual-specificity RNA methyltransferase RlmN"/>
    <property type="match status" value="1"/>
</dbReference>
<dbReference type="Gene3D" id="1.10.150.530">
    <property type="match status" value="1"/>
</dbReference>
<dbReference type="Gene3D" id="3.20.20.70">
    <property type="entry name" value="Aldolase class I"/>
    <property type="match status" value="1"/>
</dbReference>
<dbReference type="HAMAP" id="MF_01849">
    <property type="entry name" value="RNA_methyltr_RlmN"/>
    <property type="match status" value="1"/>
</dbReference>
<dbReference type="InterPro" id="IPR013785">
    <property type="entry name" value="Aldolase_TIM"/>
</dbReference>
<dbReference type="InterPro" id="IPR040072">
    <property type="entry name" value="Methyltransferase_A"/>
</dbReference>
<dbReference type="InterPro" id="IPR048641">
    <property type="entry name" value="RlmN_N"/>
</dbReference>
<dbReference type="InterPro" id="IPR027492">
    <property type="entry name" value="RNA_MTrfase_RlmN"/>
</dbReference>
<dbReference type="InterPro" id="IPR004383">
    <property type="entry name" value="rRNA_lsu_MTrfase_RlmN/Cfr"/>
</dbReference>
<dbReference type="InterPro" id="IPR007197">
    <property type="entry name" value="rSAM"/>
</dbReference>
<dbReference type="NCBIfam" id="TIGR00048">
    <property type="entry name" value="rRNA_mod_RlmN"/>
    <property type="match status" value="1"/>
</dbReference>
<dbReference type="PANTHER" id="PTHR30544">
    <property type="entry name" value="23S RRNA METHYLTRANSFERASE"/>
    <property type="match status" value="1"/>
</dbReference>
<dbReference type="PANTHER" id="PTHR30544:SF5">
    <property type="entry name" value="RADICAL SAM CORE DOMAIN-CONTAINING PROTEIN"/>
    <property type="match status" value="1"/>
</dbReference>
<dbReference type="Pfam" id="PF04055">
    <property type="entry name" value="Radical_SAM"/>
    <property type="match status" value="1"/>
</dbReference>
<dbReference type="Pfam" id="PF21016">
    <property type="entry name" value="RlmN_N"/>
    <property type="match status" value="1"/>
</dbReference>
<dbReference type="PIRSF" id="PIRSF006004">
    <property type="entry name" value="CHP00048"/>
    <property type="match status" value="1"/>
</dbReference>
<dbReference type="SFLD" id="SFLDF00275">
    <property type="entry name" value="adenosine_C2_methyltransferase"/>
    <property type="match status" value="1"/>
</dbReference>
<dbReference type="SFLD" id="SFLDG01062">
    <property type="entry name" value="methyltransferase_(Class_A)"/>
    <property type="match status" value="1"/>
</dbReference>
<dbReference type="SUPFAM" id="SSF102114">
    <property type="entry name" value="Radical SAM enzymes"/>
    <property type="match status" value="1"/>
</dbReference>
<dbReference type="PROSITE" id="PS51918">
    <property type="entry name" value="RADICAL_SAM"/>
    <property type="match status" value="1"/>
</dbReference>
<protein>
    <recommendedName>
        <fullName evidence="1">Probable dual-specificity RNA methyltransferase RlmN</fullName>
        <ecNumber evidence="1">2.1.1.192</ecNumber>
    </recommendedName>
    <alternativeName>
        <fullName evidence="1">23S rRNA (adenine(2503)-C(2))-methyltransferase</fullName>
    </alternativeName>
    <alternativeName>
        <fullName evidence="1">23S rRNA m2A2503 methyltransferase</fullName>
    </alternativeName>
    <alternativeName>
        <fullName evidence="1">Ribosomal RNA large subunit methyltransferase N</fullName>
    </alternativeName>
    <alternativeName>
        <fullName evidence="1">tRNA (adenine(37)-C(2))-methyltransferase</fullName>
    </alternativeName>
    <alternativeName>
        <fullName evidence="1">tRNA m2A37 methyltransferase</fullName>
    </alternativeName>
</protein>
<comment type="function">
    <text evidence="1">Specifically methylates position 2 of adenine 2503 in 23S rRNA and position 2 of adenine 37 in tRNAs.</text>
</comment>
<comment type="catalytic activity">
    <reaction evidence="1">
        <text>adenosine(2503) in 23S rRNA + 2 reduced [2Fe-2S]-[ferredoxin] + 2 S-adenosyl-L-methionine = 2-methyladenosine(2503) in 23S rRNA + 5'-deoxyadenosine + L-methionine + 2 oxidized [2Fe-2S]-[ferredoxin] + S-adenosyl-L-homocysteine</text>
        <dbReference type="Rhea" id="RHEA:42916"/>
        <dbReference type="Rhea" id="RHEA-COMP:10000"/>
        <dbReference type="Rhea" id="RHEA-COMP:10001"/>
        <dbReference type="Rhea" id="RHEA-COMP:10152"/>
        <dbReference type="Rhea" id="RHEA-COMP:10282"/>
        <dbReference type="ChEBI" id="CHEBI:17319"/>
        <dbReference type="ChEBI" id="CHEBI:33737"/>
        <dbReference type="ChEBI" id="CHEBI:33738"/>
        <dbReference type="ChEBI" id="CHEBI:57844"/>
        <dbReference type="ChEBI" id="CHEBI:57856"/>
        <dbReference type="ChEBI" id="CHEBI:59789"/>
        <dbReference type="ChEBI" id="CHEBI:74411"/>
        <dbReference type="ChEBI" id="CHEBI:74497"/>
        <dbReference type="EC" id="2.1.1.192"/>
    </reaction>
</comment>
<comment type="catalytic activity">
    <reaction evidence="1">
        <text>adenosine(37) in tRNA + 2 reduced [2Fe-2S]-[ferredoxin] + 2 S-adenosyl-L-methionine = 2-methyladenosine(37) in tRNA + 5'-deoxyadenosine + L-methionine + 2 oxidized [2Fe-2S]-[ferredoxin] + S-adenosyl-L-homocysteine</text>
        <dbReference type="Rhea" id="RHEA:43332"/>
        <dbReference type="Rhea" id="RHEA-COMP:10000"/>
        <dbReference type="Rhea" id="RHEA-COMP:10001"/>
        <dbReference type="Rhea" id="RHEA-COMP:10162"/>
        <dbReference type="Rhea" id="RHEA-COMP:10485"/>
        <dbReference type="ChEBI" id="CHEBI:17319"/>
        <dbReference type="ChEBI" id="CHEBI:33737"/>
        <dbReference type="ChEBI" id="CHEBI:33738"/>
        <dbReference type="ChEBI" id="CHEBI:57844"/>
        <dbReference type="ChEBI" id="CHEBI:57856"/>
        <dbReference type="ChEBI" id="CHEBI:59789"/>
        <dbReference type="ChEBI" id="CHEBI:74411"/>
        <dbReference type="ChEBI" id="CHEBI:74497"/>
        <dbReference type="EC" id="2.1.1.192"/>
    </reaction>
</comment>
<comment type="cofactor">
    <cofactor evidence="1">
        <name>[4Fe-4S] cluster</name>
        <dbReference type="ChEBI" id="CHEBI:49883"/>
    </cofactor>
    <text evidence="1">Binds 1 [4Fe-4S] cluster. The cluster is coordinated with 3 cysteines and an exchangeable S-adenosyl-L-methionine.</text>
</comment>
<comment type="subcellular location">
    <subcellularLocation>
        <location evidence="1">Cytoplasm</location>
    </subcellularLocation>
</comment>
<comment type="miscellaneous">
    <text evidence="1">Reaction proceeds by a ping-pong mechanism involving intermediate methylation of a conserved cysteine residue.</text>
</comment>
<comment type="similarity">
    <text evidence="1">Belongs to the radical SAM superfamily. RlmN family.</text>
</comment>